<accession>A9BJH6</accession>
<keyword id="KW-0210">Decarboxylase</keyword>
<keyword id="KW-0456">Lyase</keyword>
<keyword id="KW-0665">Pyrimidine biosynthesis</keyword>
<evidence type="ECO:0000255" key="1">
    <source>
        <dbReference type="HAMAP-Rule" id="MF_01215"/>
    </source>
</evidence>
<reference key="1">
    <citation type="submission" date="2007-11" db="EMBL/GenBank/DDBJ databases">
        <title>Complete sequence of Petroga mobilis SJ95.</title>
        <authorList>
            <consortium name="US DOE Joint Genome Institute"/>
            <person name="Copeland A."/>
            <person name="Lucas S."/>
            <person name="Lapidus A."/>
            <person name="Barry K."/>
            <person name="Glavina del Rio T."/>
            <person name="Dalin E."/>
            <person name="Tice H."/>
            <person name="Pitluck S."/>
            <person name="Meincke L."/>
            <person name="Brettin T."/>
            <person name="Bruce D."/>
            <person name="Detter J.C."/>
            <person name="Han C."/>
            <person name="Kuske C.R."/>
            <person name="Schmutz J."/>
            <person name="Larimer F."/>
            <person name="Land M."/>
            <person name="Hauser L."/>
            <person name="Kyrpides N."/>
            <person name="Mikhailova N."/>
            <person name="Noll K."/>
            <person name="Richardson P."/>
        </authorList>
    </citation>
    <scope>NUCLEOTIDE SEQUENCE [LARGE SCALE GENOMIC DNA]</scope>
    <source>
        <strain>DSM 10674 / SJ95</strain>
    </source>
</reference>
<proteinExistence type="inferred from homology"/>
<gene>
    <name evidence="1" type="primary">pyrF</name>
    <name type="ordered locus">Pmob_0659</name>
</gene>
<protein>
    <recommendedName>
        <fullName evidence="1">Orotidine 5'-phosphate decarboxylase</fullName>
        <ecNumber evidence="1">4.1.1.23</ecNumber>
    </recommendedName>
    <alternativeName>
        <fullName evidence="1">OMP decarboxylase</fullName>
        <shortName evidence="1">OMPDCase</shortName>
        <shortName evidence="1">OMPdecase</shortName>
    </alternativeName>
</protein>
<name>PYRF_PETMO</name>
<comment type="catalytic activity">
    <reaction evidence="1">
        <text>orotidine 5'-phosphate + H(+) = UMP + CO2</text>
        <dbReference type="Rhea" id="RHEA:11596"/>
        <dbReference type="ChEBI" id="CHEBI:15378"/>
        <dbReference type="ChEBI" id="CHEBI:16526"/>
        <dbReference type="ChEBI" id="CHEBI:57538"/>
        <dbReference type="ChEBI" id="CHEBI:57865"/>
        <dbReference type="EC" id="4.1.1.23"/>
    </reaction>
</comment>
<comment type="pathway">
    <text evidence="1">Pyrimidine metabolism; UMP biosynthesis via de novo pathway; UMP from orotate: step 2/2.</text>
</comment>
<comment type="similarity">
    <text evidence="1">Belongs to the OMP decarboxylase family. Type 2 subfamily.</text>
</comment>
<organism>
    <name type="scientific">Petrotoga mobilis (strain DSM 10674 / SJ95)</name>
    <dbReference type="NCBI Taxonomy" id="403833"/>
    <lineage>
        <taxon>Bacteria</taxon>
        <taxon>Thermotogati</taxon>
        <taxon>Thermotogota</taxon>
        <taxon>Thermotogae</taxon>
        <taxon>Petrotogales</taxon>
        <taxon>Petrotogaceae</taxon>
        <taxon>Petrotoga</taxon>
    </lineage>
</organism>
<dbReference type="EC" id="4.1.1.23" evidence="1"/>
<dbReference type="EMBL" id="CP000879">
    <property type="protein sequence ID" value="ABX31390.1"/>
    <property type="molecule type" value="Genomic_DNA"/>
</dbReference>
<dbReference type="RefSeq" id="WP_012208493.1">
    <property type="nucleotide sequence ID" value="NC_010003.1"/>
</dbReference>
<dbReference type="SMR" id="A9BJH6"/>
<dbReference type="STRING" id="403833.Pmob_0659"/>
<dbReference type="KEGG" id="pmo:Pmob_0659"/>
<dbReference type="eggNOG" id="COG0284">
    <property type="taxonomic scope" value="Bacteria"/>
</dbReference>
<dbReference type="HOGENOM" id="CLU_060704_1_1_0"/>
<dbReference type="OrthoDB" id="9808470at2"/>
<dbReference type="UniPathway" id="UPA00070">
    <property type="reaction ID" value="UER00120"/>
</dbReference>
<dbReference type="Proteomes" id="UP000000789">
    <property type="component" value="Chromosome"/>
</dbReference>
<dbReference type="GO" id="GO:0004590">
    <property type="term" value="F:orotidine-5'-phosphate decarboxylase activity"/>
    <property type="evidence" value="ECO:0007669"/>
    <property type="project" value="UniProtKB-UniRule"/>
</dbReference>
<dbReference type="GO" id="GO:0006207">
    <property type="term" value="P:'de novo' pyrimidine nucleobase biosynthetic process"/>
    <property type="evidence" value="ECO:0007669"/>
    <property type="project" value="InterPro"/>
</dbReference>
<dbReference type="GO" id="GO:0044205">
    <property type="term" value="P:'de novo' UMP biosynthetic process"/>
    <property type="evidence" value="ECO:0007669"/>
    <property type="project" value="UniProtKB-UniRule"/>
</dbReference>
<dbReference type="CDD" id="cd04725">
    <property type="entry name" value="OMP_decarboxylase_like"/>
    <property type="match status" value="1"/>
</dbReference>
<dbReference type="FunFam" id="3.20.20.70:FF:000246">
    <property type="entry name" value="Orotidine 5'-phosphate decarboxylase"/>
    <property type="match status" value="1"/>
</dbReference>
<dbReference type="Gene3D" id="3.20.20.70">
    <property type="entry name" value="Aldolase class I"/>
    <property type="match status" value="1"/>
</dbReference>
<dbReference type="HAMAP" id="MF_01215">
    <property type="entry name" value="OMPdecase_type2"/>
    <property type="match status" value="1"/>
</dbReference>
<dbReference type="InterPro" id="IPR013785">
    <property type="entry name" value="Aldolase_TIM"/>
</dbReference>
<dbReference type="InterPro" id="IPR011995">
    <property type="entry name" value="OMPdecase_type-2"/>
</dbReference>
<dbReference type="InterPro" id="IPR001754">
    <property type="entry name" value="OMPdeCOase_dom"/>
</dbReference>
<dbReference type="InterPro" id="IPR011060">
    <property type="entry name" value="RibuloseP-bd_barrel"/>
</dbReference>
<dbReference type="NCBIfam" id="TIGR02127">
    <property type="entry name" value="pyrF_sub2"/>
    <property type="match status" value="1"/>
</dbReference>
<dbReference type="PANTHER" id="PTHR43375">
    <property type="entry name" value="OROTIDINE 5'-PHOSPHATE DECARBOXYLASE"/>
    <property type="match status" value="1"/>
</dbReference>
<dbReference type="PANTHER" id="PTHR43375:SF1">
    <property type="entry name" value="OROTIDINE 5'-PHOSPHATE DECARBOXYLASE"/>
    <property type="match status" value="1"/>
</dbReference>
<dbReference type="Pfam" id="PF00215">
    <property type="entry name" value="OMPdecase"/>
    <property type="match status" value="1"/>
</dbReference>
<dbReference type="SMART" id="SM00934">
    <property type="entry name" value="OMPdecase"/>
    <property type="match status" value="1"/>
</dbReference>
<dbReference type="SUPFAM" id="SSF51366">
    <property type="entry name" value="Ribulose-phoshate binding barrel"/>
    <property type="match status" value="1"/>
</dbReference>
<sequence length="289" mass="32855">MIIDRLFNEVEKKGNVCVGLDTHLDYIPVNLKEKYQDIDEILFEFNKEIIDKTYDLVPVYKLQIAYYEAYGIKGLLGYKKTIEYLRSIKKITIGDIKRGDISSTAQMYAKAHFEGEFEVDFVTLNPYLGFDSLTPYLKYIESGEKGVFVLLRTSNPGAKDIQYLKVSPKDEYLYYIVGDKLNEIGVKYRGSCGYSSIGAVVGGTHIEEAKEIRNRYKNMFFLIPGYGHQGATGKDVSLYLNKGNGGVINSSRGIITAYKNYKDGDQRFADYARKAVLDMREDIQSERGV</sequence>
<feature type="chain" id="PRO_1000085575" description="Orotidine 5'-phosphate decarboxylase">
    <location>
        <begin position="1"/>
        <end position="289"/>
    </location>
</feature>
<feature type="active site" description="Proton donor" evidence="1">
    <location>
        <position position="97"/>
    </location>
</feature>